<name>DCT2B_XENLA</name>
<evidence type="ECO:0000250" key="1">
    <source>
        <dbReference type="UniProtKB" id="A0A5G2QD80"/>
    </source>
</evidence>
<evidence type="ECO:0000250" key="2">
    <source>
        <dbReference type="UniProtKB" id="Q13561"/>
    </source>
</evidence>
<evidence type="ECO:0000250" key="3">
    <source>
        <dbReference type="UniProtKB" id="Q99KJ8"/>
    </source>
</evidence>
<evidence type="ECO:0000255" key="4"/>
<evidence type="ECO:0000256" key="5">
    <source>
        <dbReference type="SAM" id="MobiDB-lite"/>
    </source>
</evidence>
<evidence type="ECO:0000305" key="6"/>
<dbReference type="EMBL" id="BC070987">
    <property type="protein sequence ID" value="AAH70987.1"/>
    <property type="molecule type" value="mRNA"/>
</dbReference>
<dbReference type="RefSeq" id="NP_001080607.1">
    <property type="nucleotide sequence ID" value="NM_001087138.1"/>
</dbReference>
<dbReference type="SMR" id="Q6IRB3"/>
<dbReference type="DNASU" id="380299"/>
<dbReference type="GeneID" id="380299"/>
<dbReference type="KEGG" id="xla:380299"/>
<dbReference type="AGR" id="Xenbase:XB-GENE-6256553"/>
<dbReference type="CTD" id="380299"/>
<dbReference type="Xenbase" id="XB-GENE-6256553">
    <property type="gene designation" value="dctn2.S"/>
</dbReference>
<dbReference type="OrthoDB" id="4977at2759"/>
<dbReference type="Proteomes" id="UP000186698">
    <property type="component" value="Chromosome 2S"/>
</dbReference>
<dbReference type="Bgee" id="380299">
    <property type="expression patterns" value="Expressed in blastula and 19 other cell types or tissues"/>
</dbReference>
<dbReference type="GO" id="GO:0005813">
    <property type="term" value="C:centrosome"/>
    <property type="evidence" value="ECO:0000318"/>
    <property type="project" value="GO_Central"/>
</dbReference>
<dbReference type="GO" id="GO:0005737">
    <property type="term" value="C:cytoplasm"/>
    <property type="evidence" value="ECO:0000318"/>
    <property type="project" value="GO_Central"/>
</dbReference>
<dbReference type="GO" id="GO:0005869">
    <property type="term" value="C:dynactin complex"/>
    <property type="evidence" value="ECO:0000318"/>
    <property type="project" value="GO_Central"/>
</dbReference>
<dbReference type="GO" id="GO:0030286">
    <property type="term" value="C:dynein complex"/>
    <property type="evidence" value="ECO:0007669"/>
    <property type="project" value="UniProtKB-KW"/>
</dbReference>
<dbReference type="GO" id="GO:0016020">
    <property type="term" value="C:membrane"/>
    <property type="evidence" value="ECO:0007669"/>
    <property type="project" value="UniProtKB-SubCell"/>
</dbReference>
<dbReference type="GO" id="GO:0005874">
    <property type="term" value="C:microtubule"/>
    <property type="evidence" value="ECO:0007669"/>
    <property type="project" value="UniProtKB-KW"/>
</dbReference>
<dbReference type="GO" id="GO:0031982">
    <property type="term" value="C:vesicle"/>
    <property type="evidence" value="ECO:0000250"/>
    <property type="project" value="UniProtKB"/>
</dbReference>
<dbReference type="GO" id="GO:0007052">
    <property type="term" value="P:mitotic spindle organization"/>
    <property type="evidence" value="ECO:0000318"/>
    <property type="project" value="GO_Central"/>
</dbReference>
<dbReference type="InterPro" id="IPR028133">
    <property type="entry name" value="Dynamitin"/>
</dbReference>
<dbReference type="PANTHER" id="PTHR15346">
    <property type="entry name" value="DYNACTIN SUBUNIT"/>
    <property type="match status" value="1"/>
</dbReference>
<dbReference type="Pfam" id="PF04912">
    <property type="entry name" value="Dynamitin"/>
    <property type="match status" value="1"/>
</dbReference>
<comment type="function">
    <text evidence="1 3">Part of the dynactin complex that activates the molecular motor dynein for ultra-processive transport along microtubules. In the dynactin soulder domain, binds the ACTR1A filament and acts as a molecular ruler to determine the length (By similarity). Modulates cytoplasmic dynein binding to an organelle, and plays a role in prometaphase chromosome alignment and spindle organization during mitosis. Involved in anchoring microtubules to centrosomes (By similarity).</text>
</comment>
<comment type="subunit">
    <text evidence="1">Subunit of dynactin, a multiprotein complex part of a tripartite complex with dynein and a adapter, such as BICDL1, BICD2 or HOOK3. The dynactin complex is built around ACTR1A/ACTB filament and consists of an actin-related filament composed of a shoulder domain, a pointed end and a barbed end. Its length is defined by its flexible shoulder domain. The soulder is composed of 2 DCTN1 subunits, 4 DCTN2 and 2 DCTN3.</text>
</comment>
<comment type="subcellular location">
    <subcellularLocation>
        <location evidence="2">Cytoplasm</location>
        <location evidence="2">Cytoskeleton</location>
        <location evidence="2">Microtubule organizing center</location>
        <location evidence="2">Centrosome</location>
    </subcellularLocation>
    <subcellularLocation>
        <location evidence="2">Membrane</location>
        <topology evidence="2">Peripheral membrane protein</topology>
    </subcellularLocation>
    <subcellularLocation>
        <location evidence="1">Cytoplasm</location>
        <location evidence="1">Cytoskeleton</location>
    </subcellularLocation>
</comment>
<comment type="similarity">
    <text evidence="6">Belongs to the dynactin subunit 2 family.</text>
</comment>
<gene>
    <name type="primary">dctn2-b</name>
</gene>
<sequence>MADPKYADLPGIARNEPDLYETSDLPEDDQAEFDAEELTSTSVEHIIVNPNAAYDKFKDKKVGTRCLDFSDRITKSKRTGYESGEYEILGEGLGIKETPQQKYQRLLHEVQELTQEVEKTQSTLKESATEEKLTPVALAKQVAALKQQLVSTHLEKLLGPDAAINLTDPDGALAKRLLTQLDAAKTRKDPEGKSSAKGPGPDNENLVTYELHCRPEQNKFSQAAKMAELEKRLGELEAAVRCDQDTQNPLTVGLQGSCLMDTVEILQAKVNLLDVASLDQVEARLQSVLGKMNEIAKHKATIEDADTESKVHQLYETVQKWDSMSITLPQVVQRLLTLKQLHEQAMQFGQLLTHLDTTQQMISNSLKDNTNALAMVQKAMKENLATVEDNFSSIDGRIKKLSK</sequence>
<accession>Q6IRB3</accession>
<keyword id="KW-0175">Coiled coil</keyword>
<keyword id="KW-0963">Cytoplasm</keyword>
<keyword id="KW-0206">Cytoskeleton</keyword>
<keyword id="KW-0243">Dynein</keyword>
<keyword id="KW-0472">Membrane</keyword>
<keyword id="KW-0493">Microtubule</keyword>
<keyword id="KW-1185">Reference proteome</keyword>
<proteinExistence type="evidence at transcript level"/>
<reference key="1">
    <citation type="submission" date="2004-05" db="EMBL/GenBank/DDBJ databases">
        <authorList>
            <consortium name="NIH - Xenopus Gene Collection (XGC) project"/>
        </authorList>
    </citation>
    <scope>NUCLEOTIDE SEQUENCE [LARGE SCALE MRNA]</scope>
    <source>
        <tissue>Embryo</tissue>
    </source>
</reference>
<organism>
    <name type="scientific">Xenopus laevis</name>
    <name type="common">African clawed frog</name>
    <dbReference type="NCBI Taxonomy" id="8355"/>
    <lineage>
        <taxon>Eukaryota</taxon>
        <taxon>Metazoa</taxon>
        <taxon>Chordata</taxon>
        <taxon>Craniata</taxon>
        <taxon>Vertebrata</taxon>
        <taxon>Euteleostomi</taxon>
        <taxon>Amphibia</taxon>
        <taxon>Batrachia</taxon>
        <taxon>Anura</taxon>
        <taxon>Pipoidea</taxon>
        <taxon>Pipidae</taxon>
        <taxon>Xenopodinae</taxon>
        <taxon>Xenopus</taxon>
        <taxon>Xenopus</taxon>
    </lineage>
</organism>
<protein>
    <recommendedName>
        <fullName>Dynactin subunit 2-B</fullName>
    </recommendedName>
</protein>
<feature type="chain" id="PRO_0000288770" description="Dynactin subunit 2-B">
    <location>
        <begin position="1"/>
        <end position="403"/>
    </location>
</feature>
<feature type="region of interest" description="Disordered" evidence="5">
    <location>
        <begin position="1"/>
        <end position="26"/>
    </location>
</feature>
<feature type="region of interest" description="Disordered" evidence="5">
    <location>
        <begin position="183"/>
        <end position="206"/>
    </location>
</feature>
<feature type="coiled-coil region" evidence="4">
    <location>
        <begin position="99"/>
        <end position="132"/>
    </location>
</feature>
<feature type="coiled-coil region" evidence="4">
    <location>
        <begin position="381"/>
        <end position="401"/>
    </location>
</feature>
<feature type="compositionally biased region" description="Basic and acidic residues" evidence="5">
    <location>
        <begin position="184"/>
        <end position="194"/>
    </location>
</feature>